<accession>Q02790</accession>
<accession>D3DUQ1</accession>
<accession>Q9UCP1</accession>
<accession>Q9UCV7</accession>
<keyword id="KW-0002">3D-structure</keyword>
<keyword id="KW-0007">Acetylation</keyword>
<keyword id="KW-0966">Cell projection</keyword>
<keyword id="KW-0143">Chaperone</keyword>
<keyword id="KW-0963">Cytoplasm</keyword>
<keyword id="KW-0206">Cytoskeleton</keyword>
<keyword id="KW-0903">Direct protein sequencing</keyword>
<keyword id="KW-0413">Isomerase</keyword>
<keyword id="KW-1017">Isopeptide bond</keyword>
<keyword id="KW-0488">Methylation</keyword>
<keyword id="KW-0493">Microtubule</keyword>
<keyword id="KW-0496">Mitochondrion</keyword>
<keyword id="KW-0539">Nucleus</keyword>
<keyword id="KW-0597">Phosphoprotein</keyword>
<keyword id="KW-1267">Proteomics identification</keyword>
<keyword id="KW-1185">Reference proteome</keyword>
<keyword id="KW-0677">Repeat</keyword>
<keyword id="KW-0697">Rotamase</keyword>
<keyword id="KW-0802">TPR repeat</keyword>
<keyword id="KW-0832">Ubl conjugation</keyword>
<dbReference type="EC" id="5.2.1.8"/>
<dbReference type="EMBL" id="M88279">
    <property type="protein sequence ID" value="AAA36111.1"/>
    <property type="molecule type" value="mRNA"/>
</dbReference>
<dbReference type="EMBL" id="AC005841">
    <property type="status" value="NOT_ANNOTATED_CDS"/>
    <property type="molecule type" value="Genomic_DNA"/>
</dbReference>
<dbReference type="EMBL" id="CH471116">
    <property type="protein sequence ID" value="EAW88889.1"/>
    <property type="molecule type" value="Genomic_DNA"/>
</dbReference>
<dbReference type="EMBL" id="CH471116">
    <property type="protein sequence ID" value="EAW88890.1"/>
    <property type="molecule type" value="Genomic_DNA"/>
</dbReference>
<dbReference type="EMBL" id="BC001786">
    <property type="protein sequence ID" value="AAH01786.1"/>
    <property type="molecule type" value="mRNA"/>
</dbReference>
<dbReference type="EMBL" id="BC007924">
    <property type="protein sequence ID" value="AAH07924.1"/>
    <property type="molecule type" value="mRNA"/>
</dbReference>
<dbReference type="CCDS" id="CCDS8512.1"/>
<dbReference type="PIR" id="A46372">
    <property type="entry name" value="A46372"/>
</dbReference>
<dbReference type="RefSeq" id="NP_002005.1">
    <property type="nucleotide sequence ID" value="NM_002014.4"/>
</dbReference>
<dbReference type="PDB" id="1N1A">
    <property type="method" value="X-ray"/>
    <property type="resolution" value="2.40 A"/>
    <property type="chains" value="A/B=1-140"/>
</dbReference>
<dbReference type="PDB" id="1P5Q">
    <property type="method" value="X-ray"/>
    <property type="resolution" value="2.80 A"/>
    <property type="chains" value="A/B/C=146-459"/>
</dbReference>
<dbReference type="PDB" id="1Q1C">
    <property type="method" value="X-ray"/>
    <property type="resolution" value="1.90 A"/>
    <property type="chains" value="A=2-260"/>
</dbReference>
<dbReference type="PDB" id="1QZ2">
    <property type="method" value="X-ray"/>
    <property type="resolution" value="3.00 A"/>
    <property type="chains" value="A/B/C=145-459"/>
</dbReference>
<dbReference type="PDB" id="4DRJ">
    <property type="method" value="X-ray"/>
    <property type="resolution" value="1.80 A"/>
    <property type="chains" value="A=1-140"/>
</dbReference>
<dbReference type="PDB" id="4LAV">
    <property type="method" value="X-ray"/>
    <property type="resolution" value="1.80 A"/>
    <property type="chains" value="A/B=16-260"/>
</dbReference>
<dbReference type="PDB" id="4LAW">
    <property type="method" value="X-ray"/>
    <property type="resolution" value="2.40 A"/>
    <property type="chains" value="A/B=16-260"/>
</dbReference>
<dbReference type="PDB" id="4LAX">
    <property type="method" value="X-ray"/>
    <property type="resolution" value="2.01 A"/>
    <property type="chains" value="A=16-260"/>
</dbReference>
<dbReference type="PDB" id="4LAY">
    <property type="method" value="X-ray"/>
    <property type="resolution" value="1.70 A"/>
    <property type="chains" value="A=1-260"/>
</dbReference>
<dbReference type="PDB" id="4TW8">
    <property type="method" value="X-ray"/>
    <property type="resolution" value="3.00 A"/>
    <property type="chains" value="A/B=21-255"/>
</dbReference>
<dbReference type="PDB" id="6RCY">
    <property type="method" value="X-ray"/>
    <property type="resolution" value="2.30 A"/>
    <property type="chains" value="A=1-148"/>
</dbReference>
<dbReference type="PDB" id="8FFV">
    <property type="method" value="EM"/>
    <property type="resolution" value="3.01 A"/>
    <property type="chains" value="D=1-459"/>
</dbReference>
<dbReference type="PDBsum" id="1N1A"/>
<dbReference type="PDBsum" id="1P5Q"/>
<dbReference type="PDBsum" id="1Q1C"/>
<dbReference type="PDBsum" id="1QZ2"/>
<dbReference type="PDBsum" id="4DRJ"/>
<dbReference type="PDBsum" id="4LAV"/>
<dbReference type="PDBsum" id="4LAW"/>
<dbReference type="PDBsum" id="4LAX"/>
<dbReference type="PDBsum" id="4LAY"/>
<dbReference type="PDBsum" id="4TW8"/>
<dbReference type="PDBsum" id="6RCY"/>
<dbReference type="PDBsum" id="8FFV"/>
<dbReference type="EMDB" id="EMD-29068"/>
<dbReference type="SMR" id="Q02790"/>
<dbReference type="BioGRID" id="108578">
    <property type="interactions" value="299"/>
</dbReference>
<dbReference type="DIP" id="DIP-50866N"/>
<dbReference type="FunCoup" id="Q02790">
    <property type="interactions" value="2747"/>
</dbReference>
<dbReference type="IntAct" id="Q02790">
    <property type="interactions" value="117"/>
</dbReference>
<dbReference type="MINT" id="Q02790"/>
<dbReference type="STRING" id="9606.ENSP00000001008"/>
<dbReference type="BindingDB" id="Q02790"/>
<dbReference type="ChEMBL" id="CHEMBL4050"/>
<dbReference type="DrugCentral" id="Q02790"/>
<dbReference type="GuidetoPHARMACOLOGY" id="3176"/>
<dbReference type="GlyGen" id="Q02790">
    <property type="glycosylation" value="3 sites, 1 O-linked glycan (3 sites)"/>
</dbReference>
<dbReference type="iPTMnet" id="Q02790"/>
<dbReference type="MetOSite" id="Q02790"/>
<dbReference type="PhosphoSitePlus" id="Q02790"/>
<dbReference type="SwissPalm" id="Q02790"/>
<dbReference type="BioMuta" id="FKBP4"/>
<dbReference type="DMDM" id="399866"/>
<dbReference type="REPRODUCTION-2DPAGE" id="IPI00219005"/>
<dbReference type="CPTAC" id="CPTAC-202"/>
<dbReference type="CPTAC" id="CPTAC-203"/>
<dbReference type="jPOST" id="Q02790"/>
<dbReference type="MassIVE" id="Q02790"/>
<dbReference type="PaxDb" id="9606-ENSP00000001008"/>
<dbReference type="PeptideAtlas" id="Q02790"/>
<dbReference type="ProteomicsDB" id="58125"/>
<dbReference type="Pumba" id="Q02790"/>
<dbReference type="Antibodypedia" id="1205">
    <property type="antibodies" value="652 antibodies from 43 providers"/>
</dbReference>
<dbReference type="DNASU" id="2288"/>
<dbReference type="Ensembl" id="ENST00000001008.6">
    <property type="protein sequence ID" value="ENSP00000001008.4"/>
    <property type="gene ID" value="ENSG00000004478.8"/>
</dbReference>
<dbReference type="GeneID" id="2288"/>
<dbReference type="KEGG" id="hsa:2288"/>
<dbReference type="MANE-Select" id="ENST00000001008.6">
    <property type="protein sequence ID" value="ENSP00000001008.4"/>
    <property type="RefSeq nucleotide sequence ID" value="NM_002014.4"/>
    <property type="RefSeq protein sequence ID" value="NP_002005.1"/>
</dbReference>
<dbReference type="UCSC" id="uc001qkz.4">
    <property type="organism name" value="human"/>
</dbReference>
<dbReference type="AGR" id="HGNC:3720"/>
<dbReference type="CTD" id="2288"/>
<dbReference type="DisGeNET" id="2288"/>
<dbReference type="GeneCards" id="FKBP4"/>
<dbReference type="HGNC" id="HGNC:3720">
    <property type="gene designation" value="FKBP4"/>
</dbReference>
<dbReference type="HPA" id="ENSG00000004478">
    <property type="expression patterns" value="Low tissue specificity"/>
</dbReference>
<dbReference type="MIM" id="600611">
    <property type="type" value="gene"/>
</dbReference>
<dbReference type="neXtProt" id="NX_Q02790"/>
<dbReference type="OpenTargets" id="ENSG00000004478"/>
<dbReference type="PharmGKB" id="PA28161"/>
<dbReference type="VEuPathDB" id="HostDB:ENSG00000004478"/>
<dbReference type="eggNOG" id="KOG0543">
    <property type="taxonomic scope" value="Eukaryota"/>
</dbReference>
<dbReference type="GeneTree" id="ENSGT00940000157200"/>
<dbReference type="HOGENOM" id="CLU_013615_13_1_1"/>
<dbReference type="InParanoid" id="Q02790"/>
<dbReference type="OMA" id="RLSCNLN"/>
<dbReference type="OrthoDB" id="433738at2759"/>
<dbReference type="PAN-GO" id="Q02790">
    <property type="GO annotations" value="4 GO annotations based on evolutionary models"/>
</dbReference>
<dbReference type="PhylomeDB" id="Q02790"/>
<dbReference type="TreeFam" id="TF354214"/>
<dbReference type="PathwayCommons" id="Q02790"/>
<dbReference type="Reactome" id="R-HSA-3371497">
    <property type="pathway name" value="HSP90 chaperone cycle for steroid hormone receptors (SHR) in the presence of ligand"/>
</dbReference>
<dbReference type="Reactome" id="R-HSA-3371568">
    <property type="pathway name" value="Attenuation phase"/>
</dbReference>
<dbReference type="Reactome" id="R-HSA-8939211">
    <property type="pathway name" value="ESR-mediated signaling"/>
</dbReference>
<dbReference type="Reactome" id="R-HSA-9018519">
    <property type="pathway name" value="Estrogen-dependent gene expression"/>
</dbReference>
<dbReference type="Reactome" id="R-HSA-9679191">
    <property type="pathway name" value="Potential therapeutics for SARS"/>
</dbReference>
<dbReference type="SignaLink" id="Q02790"/>
<dbReference type="SIGNOR" id="Q02790"/>
<dbReference type="BioGRID-ORCS" id="2288">
    <property type="hits" value="16 hits in 1157 CRISPR screens"/>
</dbReference>
<dbReference type="CD-CODE" id="FB4E32DD">
    <property type="entry name" value="Presynaptic clusters and postsynaptic densities"/>
</dbReference>
<dbReference type="ChiTaRS" id="FKBP4">
    <property type="organism name" value="human"/>
</dbReference>
<dbReference type="EvolutionaryTrace" id="Q02790"/>
<dbReference type="GeneWiki" id="FKBP52"/>
<dbReference type="GenomeRNAi" id="2288"/>
<dbReference type="Pharos" id="Q02790">
    <property type="development level" value="Tchem"/>
</dbReference>
<dbReference type="PRO" id="PR:Q02790"/>
<dbReference type="Proteomes" id="UP000005640">
    <property type="component" value="Chromosome 12"/>
</dbReference>
<dbReference type="RNAct" id="Q02790">
    <property type="molecule type" value="protein"/>
</dbReference>
<dbReference type="Bgee" id="ENSG00000004478">
    <property type="expression patterns" value="Expressed in right hemisphere of cerebellum and 210 other cell types or tissues"/>
</dbReference>
<dbReference type="ExpressionAtlas" id="Q02790">
    <property type="expression patterns" value="baseline and differential"/>
</dbReference>
<dbReference type="GO" id="GO:0044295">
    <property type="term" value="C:axonal growth cone"/>
    <property type="evidence" value="ECO:0000250"/>
    <property type="project" value="UniProtKB"/>
</dbReference>
<dbReference type="GO" id="GO:0005737">
    <property type="term" value="C:cytoplasm"/>
    <property type="evidence" value="ECO:0000318"/>
    <property type="project" value="GO_Central"/>
</dbReference>
<dbReference type="GO" id="GO:0005829">
    <property type="term" value="C:cytosol"/>
    <property type="evidence" value="ECO:0000314"/>
    <property type="project" value="HPA"/>
</dbReference>
<dbReference type="GO" id="GO:0070062">
    <property type="term" value="C:extracellular exosome"/>
    <property type="evidence" value="ECO:0007005"/>
    <property type="project" value="UniProtKB"/>
</dbReference>
<dbReference type="GO" id="GO:0005874">
    <property type="term" value="C:microtubule"/>
    <property type="evidence" value="ECO:0007669"/>
    <property type="project" value="UniProtKB-KW"/>
</dbReference>
<dbReference type="GO" id="GO:0005739">
    <property type="term" value="C:mitochondrion"/>
    <property type="evidence" value="ECO:0007669"/>
    <property type="project" value="UniProtKB-SubCell"/>
</dbReference>
<dbReference type="GO" id="GO:0043025">
    <property type="term" value="C:neuronal cell body"/>
    <property type="evidence" value="ECO:0007669"/>
    <property type="project" value="Ensembl"/>
</dbReference>
<dbReference type="GO" id="GO:0005654">
    <property type="term" value="C:nucleoplasm"/>
    <property type="evidence" value="ECO:0000314"/>
    <property type="project" value="HPA"/>
</dbReference>
<dbReference type="GO" id="GO:0048471">
    <property type="term" value="C:perinuclear region of cytoplasm"/>
    <property type="evidence" value="ECO:0007669"/>
    <property type="project" value="Ensembl"/>
</dbReference>
<dbReference type="GO" id="GO:0032991">
    <property type="term" value="C:protein-containing complex"/>
    <property type="evidence" value="ECO:0007669"/>
    <property type="project" value="Ensembl"/>
</dbReference>
<dbReference type="GO" id="GO:0005524">
    <property type="term" value="F:ATP binding"/>
    <property type="evidence" value="ECO:0007669"/>
    <property type="project" value="Ensembl"/>
</dbReference>
<dbReference type="GO" id="GO:0032767">
    <property type="term" value="F:copper-dependent protein binding"/>
    <property type="evidence" value="ECO:0007669"/>
    <property type="project" value="Ensembl"/>
</dbReference>
<dbReference type="GO" id="GO:0005528">
    <property type="term" value="F:FK506 binding"/>
    <property type="evidence" value="ECO:0000304"/>
    <property type="project" value="UniProtKB"/>
</dbReference>
<dbReference type="GO" id="GO:0005525">
    <property type="term" value="F:GTP binding"/>
    <property type="evidence" value="ECO:0007669"/>
    <property type="project" value="Ensembl"/>
</dbReference>
<dbReference type="GO" id="GO:0031072">
    <property type="term" value="F:heat shock protein binding"/>
    <property type="evidence" value="ECO:0000353"/>
    <property type="project" value="UniProtKB"/>
</dbReference>
<dbReference type="GO" id="GO:0035259">
    <property type="term" value="F:nuclear glucocorticoid receptor binding"/>
    <property type="evidence" value="ECO:0007669"/>
    <property type="project" value="Ensembl"/>
</dbReference>
<dbReference type="GO" id="GO:0003755">
    <property type="term" value="F:peptidyl-prolyl cis-trans isomerase activity"/>
    <property type="evidence" value="ECO:0000314"/>
    <property type="project" value="UniProtKB"/>
</dbReference>
<dbReference type="GO" id="GO:0051219">
    <property type="term" value="F:phosphoprotein binding"/>
    <property type="evidence" value="ECO:0007669"/>
    <property type="project" value="Ensembl"/>
</dbReference>
<dbReference type="GO" id="GO:0030674">
    <property type="term" value="F:protein-macromolecule adaptor activity"/>
    <property type="evidence" value="ECO:0000304"/>
    <property type="project" value="ProtInc"/>
</dbReference>
<dbReference type="GO" id="GO:0003723">
    <property type="term" value="F:RNA binding"/>
    <property type="evidence" value="ECO:0007005"/>
    <property type="project" value="UniProtKB"/>
</dbReference>
<dbReference type="GO" id="GO:0048156">
    <property type="term" value="F:tau protein binding"/>
    <property type="evidence" value="ECO:0007669"/>
    <property type="project" value="Ensembl"/>
</dbReference>
<dbReference type="GO" id="GO:0030521">
    <property type="term" value="P:androgen receptor signaling pathway"/>
    <property type="evidence" value="ECO:0007669"/>
    <property type="project" value="Ensembl"/>
</dbReference>
<dbReference type="GO" id="GO:0061077">
    <property type="term" value="P:chaperone-mediated protein folding"/>
    <property type="evidence" value="ECO:0000314"/>
    <property type="project" value="UniProtKB"/>
</dbReference>
<dbReference type="GO" id="GO:0006825">
    <property type="term" value="P:copper ion transport"/>
    <property type="evidence" value="ECO:0007669"/>
    <property type="project" value="Ensembl"/>
</dbReference>
<dbReference type="GO" id="GO:0007566">
    <property type="term" value="P:embryo implantation"/>
    <property type="evidence" value="ECO:0007669"/>
    <property type="project" value="Ensembl"/>
</dbReference>
<dbReference type="GO" id="GO:0046661">
    <property type="term" value="P:male sex differentiation"/>
    <property type="evidence" value="ECO:0007669"/>
    <property type="project" value="Ensembl"/>
</dbReference>
<dbReference type="GO" id="GO:0031115">
    <property type="term" value="P:negative regulation of microtubule polymerization"/>
    <property type="evidence" value="ECO:0007669"/>
    <property type="project" value="Ensembl"/>
</dbReference>
<dbReference type="GO" id="GO:0031111">
    <property type="term" value="P:negative regulation of microtubule polymerization or depolymerization"/>
    <property type="evidence" value="ECO:0000250"/>
    <property type="project" value="UniProtKB"/>
</dbReference>
<dbReference type="GO" id="GO:0010977">
    <property type="term" value="P:negative regulation of neuron projection development"/>
    <property type="evidence" value="ECO:0000250"/>
    <property type="project" value="UniProtKB"/>
</dbReference>
<dbReference type="GO" id="GO:0030850">
    <property type="term" value="P:prostate gland development"/>
    <property type="evidence" value="ECO:0007669"/>
    <property type="project" value="Ensembl"/>
</dbReference>
<dbReference type="GO" id="GO:0006457">
    <property type="term" value="P:protein folding"/>
    <property type="evidence" value="ECO:0000304"/>
    <property type="project" value="ProtInc"/>
</dbReference>
<dbReference type="GO" id="GO:0031503">
    <property type="term" value="P:protein-containing complex localization"/>
    <property type="evidence" value="ECO:0007669"/>
    <property type="project" value="Ensembl"/>
</dbReference>
<dbReference type="GO" id="GO:0006463">
    <property type="term" value="P:steroid hormone receptor complex assembly"/>
    <property type="evidence" value="ECO:0007669"/>
    <property type="project" value="Ensembl"/>
</dbReference>
<dbReference type="FunFam" id="1.25.40.10:FF:000008">
    <property type="entry name" value="Peptidylprolyl isomerase"/>
    <property type="match status" value="1"/>
</dbReference>
<dbReference type="FunFam" id="3.10.50.40:FF:000011">
    <property type="entry name" value="Peptidylprolyl isomerase"/>
    <property type="match status" value="1"/>
</dbReference>
<dbReference type="FunFam" id="3.10.50.40:FF:000013">
    <property type="entry name" value="Peptidylprolyl isomerase"/>
    <property type="match status" value="1"/>
</dbReference>
<dbReference type="Gene3D" id="3.10.50.40">
    <property type="match status" value="2"/>
</dbReference>
<dbReference type="Gene3D" id="1.25.40.10">
    <property type="entry name" value="Tetratricopeptide repeat domain"/>
    <property type="match status" value="1"/>
</dbReference>
<dbReference type="IDEAL" id="IID00068"/>
<dbReference type="InterPro" id="IPR050754">
    <property type="entry name" value="FKBP4/5/8-like"/>
</dbReference>
<dbReference type="InterPro" id="IPR046357">
    <property type="entry name" value="PPIase_dom_sf"/>
</dbReference>
<dbReference type="InterPro" id="IPR001179">
    <property type="entry name" value="PPIase_FKBP_dom"/>
</dbReference>
<dbReference type="InterPro" id="IPR011990">
    <property type="entry name" value="TPR-like_helical_dom_sf"/>
</dbReference>
<dbReference type="InterPro" id="IPR013105">
    <property type="entry name" value="TPR_2"/>
</dbReference>
<dbReference type="InterPro" id="IPR019734">
    <property type="entry name" value="TPR_rpt"/>
</dbReference>
<dbReference type="PANTHER" id="PTHR46512">
    <property type="entry name" value="PEPTIDYLPROLYL ISOMERASE"/>
    <property type="match status" value="1"/>
</dbReference>
<dbReference type="PANTHER" id="PTHR46512:SF9">
    <property type="entry name" value="PEPTIDYLPROLYL ISOMERASE"/>
    <property type="match status" value="1"/>
</dbReference>
<dbReference type="Pfam" id="PF00254">
    <property type="entry name" value="FKBP_C"/>
    <property type="match status" value="2"/>
</dbReference>
<dbReference type="Pfam" id="PF00515">
    <property type="entry name" value="TPR_1"/>
    <property type="match status" value="1"/>
</dbReference>
<dbReference type="Pfam" id="PF07719">
    <property type="entry name" value="TPR_2"/>
    <property type="match status" value="1"/>
</dbReference>
<dbReference type="SMART" id="SM00028">
    <property type="entry name" value="TPR"/>
    <property type="match status" value="3"/>
</dbReference>
<dbReference type="SUPFAM" id="SSF54534">
    <property type="entry name" value="FKBP-like"/>
    <property type="match status" value="2"/>
</dbReference>
<dbReference type="SUPFAM" id="SSF48452">
    <property type="entry name" value="TPR-like"/>
    <property type="match status" value="1"/>
</dbReference>
<dbReference type="PROSITE" id="PS50059">
    <property type="entry name" value="FKBP_PPIASE"/>
    <property type="match status" value="2"/>
</dbReference>
<dbReference type="PROSITE" id="PS50005">
    <property type="entry name" value="TPR"/>
    <property type="match status" value="3"/>
</dbReference>
<dbReference type="PROSITE" id="PS50293">
    <property type="entry name" value="TPR_REGION"/>
    <property type="match status" value="2"/>
</dbReference>
<reference key="1">
    <citation type="journal article" date="1992" name="Proc. Natl. Acad. Sci. U.S.A.">
        <title>Expression and characterization of human FKBP52, an immunophilin that associates with the 90-kDa heat shock protein and is a component of steroid receptor complexes.</title>
        <authorList>
            <person name="Peattie D.A."/>
            <person name="Harding M.W."/>
            <person name="Fleming M.A."/>
            <person name="Decenzo M.T."/>
            <person name="Lippke J.A."/>
            <person name="Livingston D.J."/>
            <person name="Benasutti M."/>
        </authorList>
    </citation>
    <scope>NUCLEOTIDE SEQUENCE [MRNA]</scope>
    <scope>FUNCTION</scope>
    <scope>ACTIVITY REGULATION</scope>
    <scope>TISSUE SPECIFICITY</scope>
    <source>
        <tissue>Placenta</tissue>
    </source>
</reference>
<reference key="2">
    <citation type="journal article" date="2006" name="Nature">
        <title>The finished DNA sequence of human chromosome 12.</title>
        <authorList>
            <person name="Scherer S.E."/>
            <person name="Muzny D.M."/>
            <person name="Buhay C.J."/>
            <person name="Chen R."/>
            <person name="Cree A."/>
            <person name="Ding Y."/>
            <person name="Dugan-Rocha S."/>
            <person name="Gill R."/>
            <person name="Gunaratne P."/>
            <person name="Harris R.A."/>
            <person name="Hawes A.C."/>
            <person name="Hernandez J."/>
            <person name="Hodgson A.V."/>
            <person name="Hume J."/>
            <person name="Jackson A."/>
            <person name="Khan Z.M."/>
            <person name="Kovar-Smith C."/>
            <person name="Lewis L.R."/>
            <person name="Lozado R.J."/>
            <person name="Metzker M.L."/>
            <person name="Milosavljevic A."/>
            <person name="Miner G.R."/>
            <person name="Montgomery K.T."/>
            <person name="Morgan M.B."/>
            <person name="Nazareth L.V."/>
            <person name="Scott G."/>
            <person name="Sodergren E."/>
            <person name="Song X.-Z."/>
            <person name="Steffen D."/>
            <person name="Lovering R.C."/>
            <person name="Wheeler D.A."/>
            <person name="Worley K.C."/>
            <person name="Yuan Y."/>
            <person name="Zhang Z."/>
            <person name="Adams C.Q."/>
            <person name="Ansari-Lari M.A."/>
            <person name="Ayele M."/>
            <person name="Brown M.J."/>
            <person name="Chen G."/>
            <person name="Chen Z."/>
            <person name="Clerc-Blankenburg K.P."/>
            <person name="Davis C."/>
            <person name="Delgado O."/>
            <person name="Dinh H.H."/>
            <person name="Draper H."/>
            <person name="Gonzalez-Garay M.L."/>
            <person name="Havlak P."/>
            <person name="Jackson L.R."/>
            <person name="Jacob L.S."/>
            <person name="Kelly S.H."/>
            <person name="Li L."/>
            <person name="Li Z."/>
            <person name="Liu J."/>
            <person name="Liu W."/>
            <person name="Lu J."/>
            <person name="Maheshwari M."/>
            <person name="Nguyen B.-V."/>
            <person name="Okwuonu G.O."/>
            <person name="Pasternak S."/>
            <person name="Perez L.M."/>
            <person name="Plopper F.J.H."/>
            <person name="Santibanez J."/>
            <person name="Shen H."/>
            <person name="Tabor P.E."/>
            <person name="Verduzco D."/>
            <person name="Waldron L."/>
            <person name="Wang Q."/>
            <person name="Williams G.A."/>
            <person name="Zhang J."/>
            <person name="Zhou J."/>
            <person name="Allen C.C."/>
            <person name="Amin A.G."/>
            <person name="Anyalebechi V."/>
            <person name="Bailey M."/>
            <person name="Barbaria J.A."/>
            <person name="Bimage K.E."/>
            <person name="Bryant N.P."/>
            <person name="Burch P.E."/>
            <person name="Burkett C.E."/>
            <person name="Burrell K.L."/>
            <person name="Calderon E."/>
            <person name="Cardenas V."/>
            <person name="Carter K."/>
            <person name="Casias K."/>
            <person name="Cavazos I."/>
            <person name="Cavazos S.R."/>
            <person name="Ceasar H."/>
            <person name="Chacko J."/>
            <person name="Chan S.N."/>
            <person name="Chavez D."/>
            <person name="Christopoulos C."/>
            <person name="Chu J."/>
            <person name="Cockrell R."/>
            <person name="Cox C.D."/>
            <person name="Dang M."/>
            <person name="Dathorne S.R."/>
            <person name="David R."/>
            <person name="Davis C.M."/>
            <person name="Davy-Carroll L."/>
            <person name="Deshazo D.R."/>
            <person name="Donlin J.E."/>
            <person name="D'Souza L."/>
            <person name="Eaves K.A."/>
            <person name="Egan A."/>
            <person name="Emery-Cohen A.J."/>
            <person name="Escotto M."/>
            <person name="Flagg N."/>
            <person name="Forbes L.D."/>
            <person name="Gabisi A.M."/>
            <person name="Garza M."/>
            <person name="Hamilton C."/>
            <person name="Henderson N."/>
            <person name="Hernandez O."/>
            <person name="Hines S."/>
            <person name="Hogues M.E."/>
            <person name="Huang M."/>
            <person name="Idlebird D.G."/>
            <person name="Johnson R."/>
            <person name="Jolivet A."/>
            <person name="Jones S."/>
            <person name="Kagan R."/>
            <person name="King L.M."/>
            <person name="Leal B."/>
            <person name="Lebow H."/>
            <person name="Lee S."/>
            <person name="LeVan J.M."/>
            <person name="Lewis L.C."/>
            <person name="London P."/>
            <person name="Lorensuhewa L.M."/>
            <person name="Loulseged H."/>
            <person name="Lovett D.A."/>
            <person name="Lucier A."/>
            <person name="Lucier R.L."/>
            <person name="Ma J."/>
            <person name="Madu R.C."/>
            <person name="Mapua P."/>
            <person name="Martindale A.D."/>
            <person name="Martinez E."/>
            <person name="Massey E."/>
            <person name="Mawhiney S."/>
            <person name="Meador M.G."/>
            <person name="Mendez S."/>
            <person name="Mercado C."/>
            <person name="Mercado I.C."/>
            <person name="Merritt C.E."/>
            <person name="Miner Z.L."/>
            <person name="Minja E."/>
            <person name="Mitchell T."/>
            <person name="Mohabbat F."/>
            <person name="Mohabbat K."/>
            <person name="Montgomery B."/>
            <person name="Moore N."/>
            <person name="Morris S."/>
            <person name="Munidasa M."/>
            <person name="Ngo R.N."/>
            <person name="Nguyen N.B."/>
            <person name="Nickerson E."/>
            <person name="Nwaokelemeh O.O."/>
            <person name="Nwokenkwo S."/>
            <person name="Obregon M."/>
            <person name="Oguh M."/>
            <person name="Oragunye N."/>
            <person name="Oviedo R.J."/>
            <person name="Parish B.J."/>
            <person name="Parker D.N."/>
            <person name="Parrish J."/>
            <person name="Parks K.L."/>
            <person name="Paul H.A."/>
            <person name="Payton B.A."/>
            <person name="Perez A."/>
            <person name="Perrin W."/>
            <person name="Pickens A."/>
            <person name="Primus E.L."/>
            <person name="Pu L.-L."/>
            <person name="Puazo M."/>
            <person name="Quiles M.M."/>
            <person name="Quiroz J.B."/>
            <person name="Rabata D."/>
            <person name="Reeves K."/>
            <person name="Ruiz S.J."/>
            <person name="Shao H."/>
            <person name="Sisson I."/>
            <person name="Sonaike T."/>
            <person name="Sorelle R.P."/>
            <person name="Sutton A.E."/>
            <person name="Svatek A.F."/>
            <person name="Svetz L.A."/>
            <person name="Tamerisa K.S."/>
            <person name="Taylor T.R."/>
            <person name="Teague B."/>
            <person name="Thomas N."/>
            <person name="Thorn R.D."/>
            <person name="Trejos Z.Y."/>
            <person name="Trevino B.K."/>
            <person name="Ukegbu O.N."/>
            <person name="Urban J.B."/>
            <person name="Vasquez L.I."/>
            <person name="Vera V.A."/>
            <person name="Villasana D.M."/>
            <person name="Wang L."/>
            <person name="Ward-Moore S."/>
            <person name="Warren J.T."/>
            <person name="Wei X."/>
            <person name="White F."/>
            <person name="Williamson A.L."/>
            <person name="Wleczyk R."/>
            <person name="Wooden H.S."/>
            <person name="Wooden S.H."/>
            <person name="Yen J."/>
            <person name="Yoon L."/>
            <person name="Yoon V."/>
            <person name="Zorrilla S.E."/>
            <person name="Nelson D."/>
            <person name="Kucherlapati R."/>
            <person name="Weinstock G."/>
            <person name="Gibbs R.A."/>
        </authorList>
    </citation>
    <scope>NUCLEOTIDE SEQUENCE [LARGE SCALE GENOMIC DNA]</scope>
</reference>
<reference key="3">
    <citation type="submission" date="2005-09" db="EMBL/GenBank/DDBJ databases">
        <authorList>
            <person name="Mural R.J."/>
            <person name="Istrail S."/>
            <person name="Sutton G.G."/>
            <person name="Florea L."/>
            <person name="Halpern A.L."/>
            <person name="Mobarry C.M."/>
            <person name="Lippert R."/>
            <person name="Walenz B."/>
            <person name="Shatkay H."/>
            <person name="Dew I."/>
            <person name="Miller J.R."/>
            <person name="Flanigan M.J."/>
            <person name="Edwards N.J."/>
            <person name="Bolanos R."/>
            <person name="Fasulo D."/>
            <person name="Halldorsson B.V."/>
            <person name="Hannenhalli S."/>
            <person name="Turner R."/>
            <person name="Yooseph S."/>
            <person name="Lu F."/>
            <person name="Nusskern D.R."/>
            <person name="Shue B.C."/>
            <person name="Zheng X.H."/>
            <person name="Zhong F."/>
            <person name="Delcher A.L."/>
            <person name="Huson D.H."/>
            <person name="Kravitz S.A."/>
            <person name="Mouchard L."/>
            <person name="Reinert K."/>
            <person name="Remington K.A."/>
            <person name="Clark A.G."/>
            <person name="Waterman M.S."/>
            <person name="Eichler E.E."/>
            <person name="Adams M.D."/>
            <person name="Hunkapiller M.W."/>
            <person name="Myers E.W."/>
            <person name="Venter J.C."/>
        </authorList>
    </citation>
    <scope>NUCLEOTIDE SEQUENCE [LARGE SCALE GENOMIC DNA]</scope>
</reference>
<reference key="4">
    <citation type="journal article" date="2004" name="Genome Res.">
        <title>The status, quality, and expansion of the NIH full-length cDNA project: the Mammalian Gene Collection (MGC).</title>
        <authorList>
            <consortium name="The MGC Project Team"/>
        </authorList>
    </citation>
    <scope>NUCLEOTIDE SEQUENCE [LARGE SCALE MRNA]</scope>
    <source>
        <tissue>Lymph</tissue>
        <tissue>Uterus</tissue>
    </source>
</reference>
<reference key="5">
    <citation type="submission" date="2010-01" db="UniProtKB">
        <authorList>
            <person name="Bienvenut W.V."/>
            <person name="Lourenco F."/>
            <person name="Olson M.F."/>
        </authorList>
    </citation>
    <scope>PROTEIN SEQUENCE OF 1-28; 40-73; 75-121; 139-152; 158-179; 187-206; 211-250; 257-274; 277-313; 319-354; 359-399; 409-426 AND 446-459</scope>
    <scope>CLEAVAGE OF INITIATOR METHIONINE</scope>
    <scope>ACETYLATION AT MET-1 AND THR-2</scope>
    <scope>IDENTIFICATION BY MASS SPECTROMETRY</scope>
    <source>
        <tissue>Mammary carcinoma</tissue>
        <tissue>Ovarian carcinoma</tissue>
    </source>
</reference>
<reference key="6">
    <citation type="journal article" date="1992" name="Science">
        <title>Association of a 59-kilodalton immunophilin with the glucocorticoid receptor complex.</title>
        <authorList>
            <person name="Tai P.-K.K."/>
            <person name="Albers M.W."/>
            <person name="Chang H."/>
            <person name="Faber L.E."/>
            <person name="Schreiber S.L."/>
        </authorList>
    </citation>
    <scope>PROTEIN SEQUENCE OF 2-25</scope>
    <scope>SUBUNIT</scope>
    <scope>FUNCTION</scope>
    <source>
        <tissue>Thymus</tissue>
    </source>
</reference>
<reference key="7">
    <citation type="journal article" date="1990" name="Biochemistry">
        <title>The 56-59-kilodalton protein identified in untransformed steroid receptor complexes is a unique protein that exists in cytosol in a complex with both the 70- and 90-kilodalton heat shock proteins.</title>
        <authorList>
            <person name="Sanchez E.R."/>
            <person name="Faber L.E."/>
            <person name="Henzel W.J."/>
            <person name="Pratt W.B."/>
        </authorList>
    </citation>
    <scope>PROTEIN SEQUENCE OF 2-21</scope>
    <scope>FUNCTION</scope>
    <scope>SUBUNIT</scope>
    <scope>SUBCELLULAR LOCATION</scope>
    <source>
        <tissue>Lymphocyte</tissue>
    </source>
</reference>
<reference key="8">
    <citation type="journal article" date="1992" name="J. Biol. Chem.">
        <title>The Hsp56 component of steroid receptor complexes binds to immobilized FK506 and shows homology to FKBP-12 and FKBP-13.</title>
        <authorList>
            <person name="Yem A.W."/>
            <person name="Tomasselli A.G."/>
            <person name="Heinrikson R.L."/>
            <person name="Zurcher-Neely H."/>
            <person name="Ruff V.A."/>
            <person name="Johnson R.A."/>
            <person name="Deibel M.R. Jr."/>
        </authorList>
    </citation>
    <scope>PROTEIN SEQUENCE OF 2-18</scope>
    <source>
        <tissue>T-cell</tissue>
    </source>
</reference>
<reference key="9">
    <citation type="journal article" date="1992" name="J. Biol. Chem.">
        <title>Characterization of high molecular weight FK-506 binding activities reveals a novel FK-506-binding protein as well as a protein complex.</title>
        <authorList>
            <person name="Wiederrecht G."/>
            <person name="Hung S."/>
            <person name="Chan H.K."/>
            <person name="Marcy A."/>
            <person name="Martin M."/>
            <person name="Calaycay J."/>
            <person name="Boulton D."/>
            <person name="Sigal N."/>
            <person name="Kincaid R.L."/>
            <person name="Siekierka J.J."/>
        </authorList>
    </citation>
    <scope>PROTEIN SEQUENCE OF 16-32</scope>
    <scope>SUBUNIT</scope>
</reference>
<reference key="10">
    <citation type="journal article" date="1997" name="Recept. Signal Transduct.">
        <title>The unliganded mineralocorticoid receptor is associated with heat shock proteins 70 and 90 and the immunophilin FKBP-52.</title>
        <authorList>
            <person name="Bruner K.L."/>
            <person name="Derfoul A."/>
            <person name="Robertson N.M."/>
            <person name="Guerriero G."/>
            <person name="Fernandes-Alnemri T."/>
            <person name="Alnemri E.S."/>
            <person name="Litwack G."/>
        </authorList>
    </citation>
    <scope>TERNARY COMPLEX WITH HSP90; HSP70 AND NR3C2</scope>
    <scope>DISSOCIATION UPON ALDOSTERONE BINDING</scope>
</reference>
<reference key="11">
    <citation type="journal article" date="2001" name="J. Biol. Chem.">
        <title>Evidence for a mechanism of repression of heat shock factor 1 transcriptional activity by a multichaperone complex.</title>
        <authorList>
            <person name="Guo Y."/>
            <person name="Guettouche T."/>
            <person name="Fenna M."/>
            <person name="Boellmann F."/>
            <person name="Pratt W.B."/>
            <person name="Toft D.O."/>
            <person name="Smith D.F."/>
            <person name="Voellmy R."/>
        </authorList>
    </citation>
    <scope>INTERACTION WITH HSF1</scope>
</reference>
<reference key="12">
    <citation type="journal article" date="2003" name="Proc. Natl. Acad. Sci. U.S.A.">
        <title>The FKBP-associated protein FAP48 is an antiproliferative molecule and a player in T cell activation that increases IL2 synthesis.</title>
        <authorList>
            <person name="Krummrei U."/>
            <person name="Baulieu E.-E."/>
            <person name="Chambraud B."/>
        </authorList>
    </citation>
    <scope>INTERACTION WITH GLMN</scope>
</reference>
<reference key="13">
    <citation type="journal article" date="2006" name="Nat. Biotechnol.">
        <title>A probability-based approach for high-throughput protein phosphorylation analysis and site localization.</title>
        <authorList>
            <person name="Beausoleil S.A."/>
            <person name="Villen J."/>
            <person name="Gerber S.A."/>
            <person name="Rush J."/>
            <person name="Gygi S.P."/>
        </authorList>
    </citation>
    <scope>PHOSPHORYLATION [LARGE SCALE ANALYSIS] AT SER-451</scope>
    <scope>IDENTIFICATION BY MASS SPECTROMETRY [LARGE SCALE ANALYSIS]</scope>
    <source>
        <tissue>Cervix carcinoma</tissue>
    </source>
</reference>
<reference key="14">
    <citation type="journal article" date="2007" name="Science">
        <title>ATM and ATR substrate analysis reveals extensive protein networks responsive to DNA damage.</title>
        <authorList>
            <person name="Matsuoka S."/>
            <person name="Ballif B.A."/>
            <person name="Smogorzewska A."/>
            <person name="McDonald E.R. III"/>
            <person name="Hurov K.E."/>
            <person name="Luo J."/>
            <person name="Bakalarski C.E."/>
            <person name="Zhao Z."/>
            <person name="Solimini N."/>
            <person name="Lerenthal Y."/>
            <person name="Shiloh Y."/>
            <person name="Gygi S.P."/>
            <person name="Elledge S.J."/>
        </authorList>
    </citation>
    <scope>PHOSPHORYLATION [LARGE SCALE ANALYSIS] AT SER-451 AND SER-453</scope>
    <scope>IDENTIFICATION BY MASS SPECTROMETRY [LARGE SCALE ANALYSIS]</scope>
    <source>
        <tissue>Embryonic kidney</tissue>
    </source>
</reference>
<reference key="15">
    <citation type="journal article" date="2008" name="Proc. Natl. Acad. Sci. U.S.A.">
        <title>A quantitative atlas of mitotic phosphorylation.</title>
        <authorList>
            <person name="Dephoure N."/>
            <person name="Zhou C."/>
            <person name="Villen J."/>
            <person name="Beausoleil S.A."/>
            <person name="Bakalarski C.E."/>
            <person name="Elledge S.J."/>
            <person name="Gygi S.P."/>
        </authorList>
    </citation>
    <scope>PHOSPHORYLATION [LARGE SCALE ANALYSIS] AT SER-453</scope>
    <scope>IDENTIFICATION BY MASS SPECTROMETRY [LARGE SCALE ANALYSIS]</scope>
    <source>
        <tissue>Cervix carcinoma</tissue>
    </source>
</reference>
<reference key="16">
    <citation type="journal article" date="2009" name="Anal. Chem.">
        <title>Lys-N and trypsin cover complementary parts of the phosphoproteome in a refined SCX-based approach.</title>
        <authorList>
            <person name="Gauci S."/>
            <person name="Helbig A.O."/>
            <person name="Slijper M."/>
            <person name="Krijgsveld J."/>
            <person name="Heck A.J."/>
            <person name="Mohammed S."/>
        </authorList>
    </citation>
    <scope>IDENTIFICATION BY MASS SPECTROMETRY [LARGE SCALE ANALYSIS]</scope>
</reference>
<reference key="17">
    <citation type="journal article" date="2009" name="Neuron">
        <title>Peptidyl-prolyl isomerase FKBP52 controls chemotropic guidance of neuronal growth cones via regulation of TRPC1 channel opening.</title>
        <authorList>
            <person name="Shim S."/>
            <person name="Yuan J.P."/>
            <person name="Kim J.Y."/>
            <person name="Zeng W."/>
            <person name="Huang G."/>
            <person name="Milshteyn A."/>
            <person name="Kern D."/>
            <person name="Muallem S."/>
            <person name="Ming G.L."/>
            <person name="Worley P.F."/>
        </authorList>
    </citation>
    <scope>INTERACTION WITH TRPC1</scope>
    <scope>FUNCTION</scope>
    <scope>MUTAGENESIS OF 67-PHE-ASP-68</scope>
</reference>
<reference key="18">
    <citation type="journal article" date="2009" name="Science">
        <title>Lysine acetylation targets protein complexes and co-regulates major cellular functions.</title>
        <authorList>
            <person name="Choudhary C."/>
            <person name="Kumar C."/>
            <person name="Gnad F."/>
            <person name="Nielsen M.L."/>
            <person name="Rehman M."/>
            <person name="Walther T.C."/>
            <person name="Olsen J.V."/>
            <person name="Mann M."/>
        </authorList>
    </citation>
    <scope>ACETYLATION [LARGE SCALE ANALYSIS] AT LYS-282</scope>
    <scope>IDENTIFICATION BY MASS SPECTROMETRY [LARGE SCALE ANALYSIS]</scope>
</reference>
<reference key="19">
    <citation type="journal article" date="2010" name="FEBS Lett.">
        <title>S100 proteins regulate the interaction of Hsp90 with cyclophilin 40 and FKBP52 through their tetratricopeptide repeats.</title>
        <authorList>
            <person name="Shimamoto S."/>
            <person name="Kubota Y."/>
            <person name="Tokumitsu H."/>
            <person name="Kobayashi R."/>
        </authorList>
    </citation>
    <scope>INTERACTION WITH S100A1; S100A2 AND S100A6</scope>
</reference>
<reference key="20">
    <citation type="journal article" date="2010" name="Sci. Signal.">
        <title>Quantitative phosphoproteomics reveals widespread full phosphorylation site occupancy during mitosis.</title>
        <authorList>
            <person name="Olsen J.V."/>
            <person name="Vermeulen M."/>
            <person name="Santamaria A."/>
            <person name="Kumar C."/>
            <person name="Miller M.L."/>
            <person name="Jensen L.J."/>
            <person name="Gnad F."/>
            <person name="Cox J."/>
            <person name="Jensen T.S."/>
            <person name="Nigg E.A."/>
            <person name="Brunak S."/>
            <person name="Mann M."/>
        </authorList>
    </citation>
    <scope>IDENTIFICATION BY MASS SPECTROMETRY [LARGE SCALE ANALYSIS]</scope>
    <source>
        <tissue>Cervix carcinoma</tissue>
    </source>
</reference>
<reference key="21">
    <citation type="journal article" date="2011" name="BMC Syst. Biol.">
        <title>Initial characterization of the human central proteome.</title>
        <authorList>
            <person name="Burkard T.R."/>
            <person name="Planyavsky M."/>
            <person name="Kaupe I."/>
            <person name="Breitwieser F.P."/>
            <person name="Buerckstuemmer T."/>
            <person name="Bennett K.L."/>
            <person name="Superti-Furga G."/>
            <person name="Colinge J."/>
        </authorList>
    </citation>
    <scope>IDENTIFICATION BY MASS SPECTROMETRY [LARGE SCALE ANALYSIS]</scope>
</reference>
<reference key="22">
    <citation type="journal article" date="2011" name="J. Biol. Chem.">
        <title>The 90-kDa heat-shock protein (Hsp90)-binding immunophilin FKBP51 is a mitochondrial protein that translocates to the nucleus to protect cells against oxidative stress.</title>
        <authorList>
            <person name="Gallo L.I."/>
            <person name="Lagadari M."/>
            <person name="Piwien-Pilipuk G."/>
            <person name="Galigniana M.D."/>
        </authorList>
    </citation>
    <scope>SUBCELLULAR LOCATION</scope>
    <scope>FUNCTION</scope>
    <scope>INTERACTION WITH GLUCOCORTICOID RECEPTOR</scope>
</reference>
<reference key="23">
    <citation type="journal article" date="2011" name="Sci. Signal.">
        <title>System-wide temporal characterization of the proteome and phosphoproteome of human embryonic stem cell differentiation.</title>
        <authorList>
            <person name="Rigbolt K.T."/>
            <person name="Prokhorova T.A."/>
            <person name="Akimov V."/>
            <person name="Henningsen J."/>
            <person name="Johansen P.T."/>
            <person name="Kratchmarova I."/>
            <person name="Kassem M."/>
            <person name="Mann M."/>
            <person name="Olsen J.V."/>
            <person name="Blagoev B."/>
        </authorList>
    </citation>
    <scope>PHOSPHORYLATION [LARGE SCALE ANALYSIS] AT SER-451 AND SER-453</scope>
    <scope>IDENTIFICATION BY MASS SPECTROMETRY [LARGE SCALE ANALYSIS]</scope>
</reference>
<reference key="24">
    <citation type="journal article" date="2013" name="J. Proteome Res.">
        <title>Toward a comprehensive characterization of a human cancer cell phosphoproteome.</title>
        <authorList>
            <person name="Zhou H."/>
            <person name="Di Palma S."/>
            <person name="Preisinger C."/>
            <person name="Peng M."/>
            <person name="Polat A.N."/>
            <person name="Heck A.J."/>
            <person name="Mohammed S."/>
        </authorList>
    </citation>
    <scope>PHOSPHORYLATION [LARGE SCALE ANALYSIS] AT TYR-220 AND THR-436</scope>
    <scope>IDENTIFICATION BY MASS SPECTROMETRY [LARGE SCALE ANALYSIS]</scope>
    <source>
        <tissue>Erythroleukemia</tissue>
    </source>
</reference>
<reference key="25">
    <citation type="journal article" date="2014" name="J. Proteomics">
        <title>An enzyme assisted RP-RPLC approach for in-depth analysis of human liver phosphoproteome.</title>
        <authorList>
            <person name="Bian Y."/>
            <person name="Song C."/>
            <person name="Cheng K."/>
            <person name="Dong M."/>
            <person name="Wang F."/>
            <person name="Huang J."/>
            <person name="Sun D."/>
            <person name="Wang L."/>
            <person name="Ye M."/>
            <person name="Zou H."/>
        </authorList>
    </citation>
    <scope>IDENTIFICATION BY MASS SPECTROMETRY [LARGE SCALE ANALYSIS]</scope>
    <source>
        <tissue>Liver</tissue>
    </source>
</reference>
<reference key="26">
    <citation type="journal article" date="2014" name="Proc. Natl. Acad. Sci. U.S.A.">
        <title>Mapping of SUMO sites and analysis of SUMOylation changes induced by external stimuli.</title>
        <authorList>
            <person name="Impens F."/>
            <person name="Radoshevich L."/>
            <person name="Cossart P."/>
            <person name="Ribet D."/>
        </authorList>
    </citation>
    <scope>SUMOYLATION [LARGE SCALE ANALYSIS] AT LYS-441</scope>
    <scope>IDENTIFICATION BY MASS SPECTROMETRY [LARGE SCALE ANALYSIS]</scope>
</reference>
<reference key="27">
    <citation type="journal article" date="2003" name="Acta Crystallogr. D">
        <title>Structure of the N-terminal domain of human FKBP52.</title>
        <authorList>
            <person name="Li P."/>
            <person name="Ding Y."/>
            <person name="Wu B."/>
            <person name="Shu C."/>
            <person name="Shen B."/>
            <person name="Rao Z."/>
        </authorList>
    </citation>
    <scope>X-RAY CRYSTALLOGRAPHY (2.4 ANGSTROMS) OF 2-139</scope>
</reference>
<reference key="28">
    <citation type="journal article" date="2004" name="Proc. Natl. Acad. Sci. U.S.A.">
        <title>3D structure of human FK506-binding protein 52: implications for the assembly of the glucocorticoid receptor/Hsp90/immunophilin heterocomplex.</title>
        <authorList>
            <person name="Wu B."/>
            <person name="Li P."/>
            <person name="Liu Y."/>
            <person name="Lou Z."/>
            <person name="Ding Y."/>
            <person name="Shu C."/>
            <person name="Ye S."/>
            <person name="Bartlam M."/>
            <person name="Shen B."/>
            <person name="Rao Z."/>
        </authorList>
    </citation>
    <scope>X-RAY CRYSTALLOGRAPHY (1.9 ANGSTROMS) OF 2-458 IN COMPLEX WITH HSP90</scope>
    <scope>SUBUNIT</scope>
</reference>
<proteinExistence type="evidence at protein level"/>
<gene>
    <name type="primary">FKBP4</name>
    <name type="synonym">FKBP52</name>
</gene>
<sequence length="459" mass="51805">MTAEEMKATESGAQSAPLPMEGVDISPKQDEGVLKVIKREGTGTEMPMIGDRVFVHYTGWLLDGTKFDSSLDRKDKFSFDLGKGEVIKAWDIAIATMKVGEVCHITCKPEYAYGSAGSPPKIPPNATLVFEVELFEFKGEDLTEEEDGGIIRRIQTRGEGYAKPNEGAIVEVALEGYYKDKLFDQRELRFEIGEGENLDLPYGLERAIQRMEKGEHSIVYLKPSYAFGSVGKEKFQIPPNAELKYELHLKSFEKAKESWEMNSEEKLEQSTIVKERGTVYFKEGKYKQALLQYKKIVSWLEYESSFSNEEAQKAQALRLASHLNLAMCHLKLQAFSAAIESCNKALELDSNNEKGLFRRGEAHLAVNDFELARADFQKVLQLYPNNKAAKTQLAVCQQRIRRQLAREKKLYANMFERLAEEENKAKAEASSGDHPTDTEMKEEQKSNTAGSQSQVETEA</sequence>
<protein>
    <recommendedName>
        <fullName>Peptidyl-prolyl cis-trans isomerase FKBP4</fullName>
        <shortName>PPIase FKBP4</shortName>
        <ecNumber>5.2.1.8</ecNumber>
    </recommendedName>
    <alternativeName>
        <fullName>51 kDa FK506-binding protein</fullName>
        <shortName>FKBP51</shortName>
    </alternativeName>
    <alternativeName>
        <fullName>52 kDa FK506-binding protein</fullName>
        <shortName>52 kDa FKBP</shortName>
        <shortName>FKBP-52</shortName>
    </alternativeName>
    <alternativeName>
        <fullName>59 kDa immunophilin</fullName>
        <shortName>p59</shortName>
    </alternativeName>
    <alternativeName>
        <fullName>FK506-binding protein 4</fullName>
        <shortName>FKBP-4</shortName>
    </alternativeName>
    <alternativeName>
        <fullName>FKBP59</fullName>
    </alternativeName>
    <alternativeName>
        <fullName>HSP-binding immunophilin</fullName>
        <shortName>HBI</shortName>
    </alternativeName>
    <alternativeName>
        <fullName>Immunophilin FKBP52</fullName>
    </alternativeName>
    <alternativeName>
        <fullName>Rotamase</fullName>
    </alternativeName>
    <component>
        <recommendedName>
            <fullName>Peptidyl-prolyl cis-trans isomerase FKBP4, N-terminally processed</fullName>
        </recommendedName>
    </component>
</protein>
<feature type="chain" id="PRO_0000391468" description="Peptidyl-prolyl cis-trans isomerase FKBP4">
    <location>
        <begin position="1"/>
        <end position="459"/>
    </location>
</feature>
<feature type="initiator methionine" description="Removed; alternate" evidence="10 11 17 18">
    <location>
        <position position="1"/>
    </location>
</feature>
<feature type="chain" id="PRO_0000075318" description="Peptidyl-prolyl cis-trans isomerase FKBP4, N-terminally processed">
    <location>
        <begin position="2"/>
        <end position="459"/>
    </location>
</feature>
<feature type="domain" description="PPIase FKBP-type 1" evidence="5">
    <location>
        <begin position="50"/>
        <end position="138"/>
    </location>
</feature>
<feature type="domain" description="PPIase FKBP-type 2" evidence="5">
    <location>
        <begin position="167"/>
        <end position="253"/>
    </location>
</feature>
<feature type="repeat" description="TPR 1">
    <location>
        <begin position="270"/>
        <end position="303"/>
    </location>
</feature>
<feature type="repeat" description="TPR 2">
    <location>
        <begin position="319"/>
        <end position="352"/>
    </location>
</feature>
<feature type="repeat" description="TPR 3">
    <location>
        <begin position="353"/>
        <end position="386"/>
    </location>
</feature>
<feature type="region of interest" description="Disordered" evidence="6">
    <location>
        <begin position="1"/>
        <end position="24"/>
    </location>
</feature>
<feature type="region of interest" description="Interaction with tubulin" evidence="1">
    <location>
        <begin position="267"/>
        <end position="400"/>
    </location>
</feature>
<feature type="region of interest" description="Disordered" evidence="6">
    <location>
        <begin position="421"/>
        <end position="459"/>
    </location>
</feature>
<feature type="compositionally biased region" description="Basic and acidic residues" evidence="6">
    <location>
        <begin position="434"/>
        <end position="445"/>
    </location>
</feature>
<feature type="compositionally biased region" description="Polar residues" evidence="6">
    <location>
        <begin position="446"/>
        <end position="459"/>
    </location>
</feature>
<feature type="modified residue" description="N-acetylmethionine; in peptidyl-prolyl cis-trans isomerase FKBP4; alternate" evidence="18">
    <location>
        <position position="1"/>
    </location>
</feature>
<feature type="modified residue" description="N-acetylthreonine; in peptidyl-prolyl cis-trans isomerase FKBP4, N-terminally processed; partial" evidence="18">
    <location>
        <position position="2"/>
    </location>
</feature>
<feature type="modified residue" description="Phosphothreonine; by CK2" evidence="2">
    <location>
        <position position="143"/>
    </location>
</feature>
<feature type="modified residue" description="Phosphotyrosine" evidence="24">
    <location>
        <position position="220"/>
    </location>
</feature>
<feature type="modified residue" description="N6-acetyllysine" evidence="22">
    <location>
        <position position="282"/>
    </location>
</feature>
<feature type="modified residue" description="Omega-N-methylarginine" evidence="3">
    <location>
        <position position="373"/>
    </location>
</feature>
<feature type="modified residue" description="Phosphothreonine" evidence="24">
    <location>
        <position position="436"/>
    </location>
</feature>
<feature type="modified residue" description="Phosphoserine" evidence="19 20 23">
    <location>
        <position position="451"/>
    </location>
</feature>
<feature type="modified residue" description="Phosphoserine" evidence="20 21 23">
    <location>
        <position position="453"/>
    </location>
</feature>
<feature type="cross-link" description="Glycyl lysine isopeptide (Lys-Gly) (interchain with G-Cter in SUMO1)" evidence="25">
    <location>
        <position position="441"/>
    </location>
</feature>
<feature type="sequence variant" id="VAR_050624" description="In dbSNP:rs1042228.">
    <original>T</original>
    <variation>P</variation>
    <location>
        <position position="436"/>
    </location>
</feature>
<feature type="mutagenesis site" description="Decreased catalytic activity toward TRPC1." evidence="14">
    <original>FD</original>
    <variation>DV</variation>
    <location>
        <begin position="67"/>
        <end position="68"/>
    </location>
</feature>
<feature type="strand" evidence="27">
    <location>
        <begin position="22"/>
        <end position="24"/>
    </location>
</feature>
<feature type="strand" evidence="29">
    <location>
        <begin position="30"/>
        <end position="39"/>
    </location>
</feature>
<feature type="strand" evidence="29">
    <location>
        <begin position="42"/>
        <end position="44"/>
    </location>
</feature>
<feature type="strand" evidence="29">
    <location>
        <begin position="52"/>
        <end position="61"/>
    </location>
</feature>
<feature type="turn" evidence="31">
    <location>
        <begin position="62"/>
        <end position="64"/>
    </location>
</feature>
<feature type="strand" evidence="29">
    <location>
        <begin position="66"/>
        <end position="69"/>
    </location>
</feature>
<feature type="helix" evidence="29">
    <location>
        <begin position="70"/>
        <end position="72"/>
    </location>
</feature>
<feature type="strand" evidence="29">
    <location>
        <begin position="73"/>
        <end position="75"/>
    </location>
</feature>
<feature type="strand" evidence="29">
    <location>
        <begin position="77"/>
        <end position="80"/>
    </location>
</feature>
<feature type="strand" evidence="29">
    <location>
        <begin position="83"/>
        <end position="86"/>
    </location>
</feature>
<feature type="helix" evidence="29">
    <location>
        <begin position="88"/>
        <end position="94"/>
    </location>
</feature>
<feature type="strand" evidence="29">
    <location>
        <begin position="102"/>
        <end position="107"/>
    </location>
</feature>
<feature type="helix" evidence="29">
    <location>
        <begin position="109"/>
        <end position="111"/>
    </location>
</feature>
<feature type="turn" evidence="29">
    <location>
        <begin position="112"/>
        <end position="116"/>
    </location>
</feature>
<feature type="turn" evidence="29">
    <location>
        <begin position="119"/>
        <end position="121"/>
    </location>
</feature>
<feature type="strand" evidence="29">
    <location>
        <begin position="128"/>
        <end position="138"/>
    </location>
</feature>
<feature type="strand" evidence="30">
    <location>
        <begin position="143"/>
        <end position="145"/>
    </location>
</feature>
<feature type="strand" evidence="29">
    <location>
        <begin position="147"/>
        <end position="156"/>
    </location>
</feature>
<feature type="strand" evidence="29">
    <location>
        <begin position="159"/>
        <end position="161"/>
    </location>
</feature>
<feature type="strand" evidence="29">
    <location>
        <begin position="169"/>
        <end position="178"/>
    </location>
</feature>
<feature type="strand" evidence="29">
    <location>
        <begin position="181"/>
        <end position="191"/>
    </location>
</feature>
<feature type="turn" evidence="28">
    <location>
        <begin position="192"/>
        <end position="194"/>
    </location>
</feature>
<feature type="helix" evidence="29">
    <location>
        <begin position="195"/>
        <end position="198"/>
    </location>
</feature>
<feature type="helix" evidence="29">
    <location>
        <begin position="202"/>
        <end position="208"/>
    </location>
</feature>
<feature type="strand" evidence="29">
    <location>
        <begin position="216"/>
        <end position="221"/>
    </location>
</feature>
<feature type="helix" evidence="29">
    <location>
        <begin position="223"/>
        <end position="225"/>
    </location>
</feature>
<feature type="turn" evidence="29">
    <location>
        <begin position="226"/>
        <end position="230"/>
    </location>
</feature>
<feature type="helix" evidence="29">
    <location>
        <begin position="233"/>
        <end position="235"/>
    </location>
</feature>
<feature type="strand" evidence="29">
    <location>
        <begin position="243"/>
        <end position="253"/>
    </location>
</feature>
<feature type="helix" evidence="26">
    <location>
        <begin position="258"/>
        <end position="260"/>
    </location>
</feature>
<feature type="helix" evidence="26">
    <location>
        <begin position="263"/>
        <end position="283"/>
    </location>
</feature>
<feature type="helix" evidence="26">
    <location>
        <begin position="286"/>
        <end position="299"/>
    </location>
</feature>
<feature type="turn" evidence="26">
    <location>
        <begin position="300"/>
        <end position="302"/>
    </location>
</feature>
<feature type="helix" evidence="26">
    <location>
        <begin position="309"/>
        <end position="331"/>
    </location>
</feature>
<feature type="helix" evidence="26">
    <location>
        <begin position="335"/>
        <end position="348"/>
    </location>
</feature>
<feature type="helix" evidence="26">
    <location>
        <begin position="353"/>
        <end position="365"/>
    </location>
</feature>
<feature type="helix" evidence="26">
    <location>
        <begin position="369"/>
        <end position="382"/>
    </location>
</feature>
<feature type="helix" evidence="26">
    <location>
        <begin position="387"/>
        <end position="424"/>
    </location>
</feature>
<organism>
    <name type="scientific">Homo sapiens</name>
    <name type="common">Human</name>
    <dbReference type="NCBI Taxonomy" id="9606"/>
    <lineage>
        <taxon>Eukaryota</taxon>
        <taxon>Metazoa</taxon>
        <taxon>Chordata</taxon>
        <taxon>Craniata</taxon>
        <taxon>Vertebrata</taxon>
        <taxon>Euteleostomi</taxon>
        <taxon>Mammalia</taxon>
        <taxon>Eutheria</taxon>
        <taxon>Euarchontoglires</taxon>
        <taxon>Primates</taxon>
        <taxon>Haplorrhini</taxon>
        <taxon>Catarrhini</taxon>
        <taxon>Hominidae</taxon>
        <taxon>Homo</taxon>
    </lineage>
</organism>
<comment type="function">
    <text evidence="9 11 14 16 17">Immunophilin protein with PPIase and co-chaperone activities. Component of steroid receptors heterocomplexes through interaction with heat-shock protein 90 (HSP90). May play a role in the intracellular trafficking of heterooligomeric forms of steroid hormone receptors between cytoplasm and nuclear compartments. The isomerase activity controls neuronal growth cones via regulation of TRPC1 channel opening. Also acts as a regulator of microtubule dynamics by inhibiting MAPT/TAU ability to promote microtubule assembly. May have a protective role against oxidative stress in mitochondria.</text>
</comment>
<comment type="catalytic activity">
    <reaction>
        <text>[protein]-peptidylproline (omega=180) = [protein]-peptidylproline (omega=0)</text>
        <dbReference type="Rhea" id="RHEA:16237"/>
        <dbReference type="Rhea" id="RHEA-COMP:10747"/>
        <dbReference type="Rhea" id="RHEA-COMP:10748"/>
        <dbReference type="ChEBI" id="CHEBI:83833"/>
        <dbReference type="ChEBI" id="CHEBI:83834"/>
        <dbReference type="EC" id="5.2.1.8"/>
    </reaction>
</comment>
<comment type="activity regulation">
    <text evidence="9">Inhibited by FK506.</text>
</comment>
<comment type="subunit">
    <text evidence="1 4 7 8 11 12 13 14 15 16 17">Homodimer (By similarity). Interacts with GLMN (PubMed:12604780). Associates with HSP90AA1 and HSP70 in steroid hormone receptor complexes. Also interacts with peroxisomal phytanoyl-CoA alpha-hydroxylase (PHYH). Interacts with NR3C1 and dynein. Interacts with HSF1 in the HSP90 complex. Associates with tubulin. Interacts with MAPT/TAU (By similarity). Interacts (via TPR domain) with S100A1, S100A2 and S100A6; the interaction is Ca(2+) dependent. Interaction with S100A1 and S100A2 (but not with S100A6) leads to inhibition of FKBP4-HSP90 interaction. Interacts with dynein; causes partially NR3C1 transport to the nucleus.</text>
</comment>
<comment type="interaction">
    <interactant intactId="EBI-1047444">
        <id>Q02790</id>
    </interactant>
    <interactant intactId="EBI-528269">
        <id>Q9UKV8</id>
        <label>AGO2</label>
    </interactant>
    <organismsDiffer>false</organismsDiffer>
    <experiments>2</experiments>
</comment>
<comment type="interaction">
    <interactant intactId="EBI-1047444">
        <id>Q02790</id>
    </interactant>
    <interactant intactId="EBI-608057">
        <id>P10275</id>
        <label>AR</label>
    </interactant>
    <organismsDiffer>false</organismsDiffer>
    <experiments>2</experiments>
</comment>
<comment type="interaction">
    <interactant intactId="EBI-1047444">
        <id>Q02790</id>
    </interactant>
    <interactant intactId="EBI-295634">
        <id>Q16543</id>
        <label>CDC37</label>
    </interactant>
    <organismsDiffer>false</organismsDiffer>
    <experiments>3</experiments>
</comment>
<comment type="interaction">
    <interactant intactId="EBI-1047444">
        <id>Q02790</id>
    </interactant>
    <interactant intactId="EBI-726150">
        <id>Q92990</id>
        <label>GLMN</label>
    </interactant>
    <organismsDiffer>false</organismsDiffer>
    <experiments>5</experiments>
</comment>
<comment type="interaction">
    <interactant intactId="EBI-1047444">
        <id>Q02790</id>
    </interactant>
    <interactant intactId="EBI-296047">
        <id>P07900</id>
        <label>HSP90AA1</label>
    </interactant>
    <organismsDiffer>false</organismsDiffer>
    <experiments>9</experiments>
</comment>
<comment type="interaction">
    <interactant intactId="EBI-1047444">
        <id>Q02790</id>
    </interactant>
    <interactant intactId="EBI-352572">
        <id>P08238</id>
        <label>HSP90AB1</label>
    </interactant>
    <organismsDiffer>false</organismsDiffer>
    <experiments>6</experiments>
</comment>
<comment type="interaction">
    <interactant intactId="EBI-1047444">
        <id>Q02790</id>
    </interactant>
    <interactant intactId="EBI-352682">
        <id>P04792</id>
        <label>HSPB1</label>
    </interactant>
    <organismsDiffer>false</organismsDiffer>
    <experiments>2</experiments>
</comment>
<comment type="interaction">
    <interactant intactId="EBI-1047444">
        <id>Q02790</id>
    </interactant>
    <interactant intactId="EBI-366233">
        <id>P10636-8</id>
        <label>MAPT</label>
    </interactant>
    <organismsDiffer>false</organismsDiffer>
    <experiments>7</experiments>
</comment>
<comment type="interaction">
    <interactant intactId="EBI-1047444">
        <id>Q02790</id>
    </interactant>
    <interactant intactId="EBI-752230">
        <id>P29034</id>
        <label>S100A2</label>
    </interactant>
    <organismsDiffer>false</organismsDiffer>
    <experiments>3</experiments>
</comment>
<comment type="interaction">
    <interactant intactId="EBI-1047444">
        <id>Q02790</id>
    </interactant>
    <interactant intactId="EBI-352877">
        <id>P06703</id>
        <label>S100A6</label>
    </interactant>
    <organismsDiffer>false</organismsDiffer>
    <experiments>3</experiments>
</comment>
<comment type="interaction">
    <interactant intactId="EBI-1047444">
        <id>Q02790</id>
    </interactant>
    <interactant intactId="EBI-6477109">
        <id>P35467</id>
        <label>S100a1</label>
    </interactant>
    <organismsDiffer>true</organismsDiffer>
    <experiments>7</experiments>
</comment>
<comment type="subcellular location">
    <subcellularLocation>
        <location evidence="17">Cytoplasm</location>
        <location evidence="17">Cytosol</location>
    </subcellularLocation>
    <subcellularLocation>
        <location evidence="16">Mitochondrion</location>
    </subcellularLocation>
    <subcellularLocation>
        <location evidence="3">Nucleus</location>
    </subcellularLocation>
    <subcellularLocation>
        <location evidence="4">Cytoplasm</location>
        <location evidence="4">Cytoskeleton</location>
    </subcellularLocation>
    <subcellularLocation>
        <location evidence="4">Cell projection</location>
        <location evidence="4">Axon</location>
    </subcellularLocation>
    <text evidence="4 16">Shuttles from mitochondria to nucleus; co-localizes in mitochondria with the glucocorticoid receptor (PubMed:21730050). Colocalized with MAPT/TAU in the distal part of the primary cortical neurons (By similarity).</text>
</comment>
<comment type="tissue specificity">
    <text evidence="9">Widely expressed.</text>
</comment>
<comment type="domain">
    <text evidence="1">The PPIase activity is mainly due to the first PPIase FKBP-type domain (1-138 AA).</text>
</comment>
<comment type="domain">
    <text evidence="1">The C-terminal region (AA 375-458) is required to prevent tubulin polymerization.</text>
</comment>
<comment type="domain">
    <text evidence="1">The chaperone activity resides in the C-terminal region, mainly between amino acids 264 and 400.</text>
</comment>
<comment type="domain">
    <text>The TPR repeats mediate mitochondrial localization.</text>
</comment>
<comment type="PTM">
    <text evidence="1">Phosphorylation by CK2 results in loss of HSP90 binding activity.</text>
</comment>
<comment type="online information" name="Protein Spotlight">
    <link uri="https://www.proteinspotlight.org/back_issues/118"/>
    <text>A mind astray - Issue 118 of June 2010</text>
</comment>
<evidence type="ECO:0000250" key="1"/>
<evidence type="ECO:0000250" key="2">
    <source>
        <dbReference type="UniProtKB" id="P27124"/>
    </source>
</evidence>
<evidence type="ECO:0000250" key="3">
    <source>
        <dbReference type="UniProtKB" id="P30416"/>
    </source>
</evidence>
<evidence type="ECO:0000250" key="4">
    <source>
        <dbReference type="UniProtKB" id="Q9QVC8"/>
    </source>
</evidence>
<evidence type="ECO:0000255" key="5">
    <source>
        <dbReference type="PROSITE-ProRule" id="PRU00277"/>
    </source>
</evidence>
<evidence type="ECO:0000256" key="6">
    <source>
        <dbReference type="SAM" id="MobiDB-lite"/>
    </source>
</evidence>
<evidence type="ECO:0000269" key="7">
    <source>
    </source>
</evidence>
<evidence type="ECO:0000269" key="8">
    <source>
    </source>
</evidence>
<evidence type="ECO:0000269" key="9">
    <source>
    </source>
</evidence>
<evidence type="ECO:0000269" key="10">
    <source>
    </source>
</evidence>
<evidence type="ECO:0000269" key="11">
    <source>
    </source>
</evidence>
<evidence type="ECO:0000269" key="12">
    <source>
    </source>
</evidence>
<evidence type="ECO:0000269" key="13">
    <source>
    </source>
</evidence>
<evidence type="ECO:0000269" key="14">
    <source>
    </source>
</evidence>
<evidence type="ECO:0000269" key="15">
    <source>
    </source>
</evidence>
<evidence type="ECO:0000269" key="16">
    <source>
    </source>
</evidence>
<evidence type="ECO:0000269" key="17">
    <source>
    </source>
</evidence>
<evidence type="ECO:0000269" key="18">
    <source ref="5"/>
</evidence>
<evidence type="ECO:0007744" key="19">
    <source>
    </source>
</evidence>
<evidence type="ECO:0007744" key="20">
    <source>
    </source>
</evidence>
<evidence type="ECO:0007744" key="21">
    <source>
    </source>
</evidence>
<evidence type="ECO:0007744" key="22">
    <source>
    </source>
</evidence>
<evidence type="ECO:0007744" key="23">
    <source>
    </source>
</evidence>
<evidence type="ECO:0007744" key="24">
    <source>
    </source>
</evidence>
<evidence type="ECO:0007744" key="25">
    <source>
    </source>
</evidence>
<evidence type="ECO:0007829" key="26">
    <source>
        <dbReference type="PDB" id="1P5Q"/>
    </source>
</evidence>
<evidence type="ECO:0007829" key="27">
    <source>
        <dbReference type="PDB" id="4DRJ"/>
    </source>
</evidence>
<evidence type="ECO:0007829" key="28">
    <source>
        <dbReference type="PDB" id="4LAW"/>
    </source>
</evidence>
<evidence type="ECO:0007829" key="29">
    <source>
        <dbReference type="PDB" id="4LAY"/>
    </source>
</evidence>
<evidence type="ECO:0007829" key="30">
    <source>
        <dbReference type="PDB" id="6RCY"/>
    </source>
</evidence>
<evidence type="ECO:0007829" key="31">
    <source>
        <dbReference type="PDB" id="8FFV"/>
    </source>
</evidence>
<name>FKBP4_HUMAN</name>